<sequence length="332" mass="36574">MKVTFEQLKAAFNRVLISRGVDSETADACAEMFARTTESGVYSHGVNRFPRFIQQLENGDIIPDAQPKRITSLGAIEQWDAQRSIGNLTAKKMMDRAIELAADHGIGLVALRNANHWMRGGSYGWQAAEKGYIGICWTNSIAVMPPWGAKECRIGTNPLIVAIPSTPITMVDMSMSMFSYGMLEVNRLAGRQLPVDGGFDDEGNLTKEPGVIEKNRRILPMGYWKGSGMSLVLDMIATLLSDGASVAEVTEDNSDEYGISQIFIAIEVDKLIDGPTRDAKLQRIMDYVTSAERADENQAIRLPGHEFTTLLAENRRNGITVDDSVWAKIQAL</sequence>
<dbReference type="EC" id="1.1.1.130" evidence="1"/>
<dbReference type="EMBL" id="CP000247">
    <property type="protein sequence ID" value="ABG71653.1"/>
    <property type="molecule type" value="Genomic_DNA"/>
</dbReference>
<dbReference type="SMR" id="Q0TBM6"/>
<dbReference type="KEGG" id="ecp:ECP_3679"/>
<dbReference type="HOGENOM" id="CLU_040452_4_0_6"/>
<dbReference type="Proteomes" id="UP000009182">
    <property type="component" value="Chromosome"/>
</dbReference>
<dbReference type="GO" id="GO:0005737">
    <property type="term" value="C:cytoplasm"/>
    <property type="evidence" value="ECO:0007669"/>
    <property type="project" value="UniProtKB-SubCell"/>
</dbReference>
<dbReference type="GO" id="GO:0047559">
    <property type="term" value="F:3-dehydro-L-gulonate 2-dehydrogenase activity"/>
    <property type="evidence" value="ECO:0007669"/>
    <property type="project" value="UniProtKB-UniRule"/>
</dbReference>
<dbReference type="GO" id="GO:0070403">
    <property type="term" value="F:NAD+ binding"/>
    <property type="evidence" value="ECO:0007669"/>
    <property type="project" value="InterPro"/>
</dbReference>
<dbReference type="FunFam" id="1.10.1530.10:FF:000001">
    <property type="entry name" value="2,3-diketo-L-gulonate reductase"/>
    <property type="match status" value="1"/>
</dbReference>
<dbReference type="Gene3D" id="1.10.1530.10">
    <property type="match status" value="1"/>
</dbReference>
<dbReference type="Gene3D" id="3.30.1370.60">
    <property type="entry name" value="Hypothetical oxidoreductase yiak, domain 2"/>
    <property type="match status" value="1"/>
</dbReference>
<dbReference type="Gene3D" id="3.30.60.50">
    <property type="entry name" value="Hypothetical oxidoreductase yiak, domain 3"/>
    <property type="match status" value="1"/>
</dbReference>
<dbReference type="HAMAP" id="MF_00820">
    <property type="entry name" value="Diketo_gul_reduc"/>
    <property type="match status" value="1"/>
</dbReference>
<dbReference type="InterPro" id="IPR023689">
    <property type="entry name" value="Diketo_gul_Rdtase"/>
</dbReference>
<dbReference type="InterPro" id="IPR043144">
    <property type="entry name" value="Mal/L-sulf/L-lact_DH-like_ah"/>
</dbReference>
<dbReference type="InterPro" id="IPR043143">
    <property type="entry name" value="Mal/L-sulf/L-lact_DH-like_NADP"/>
</dbReference>
<dbReference type="InterPro" id="IPR036111">
    <property type="entry name" value="Mal/L-sulfo/L-lacto_DH-like_sf"/>
</dbReference>
<dbReference type="InterPro" id="IPR003767">
    <property type="entry name" value="Malate/L-lactate_DH-like"/>
</dbReference>
<dbReference type="NCBIfam" id="NF009750">
    <property type="entry name" value="PRK13260.1"/>
    <property type="match status" value="1"/>
</dbReference>
<dbReference type="PANTHER" id="PTHR11091:SF3">
    <property type="entry name" value="2,3-DIKETO-L-GULONATE REDUCTASE"/>
    <property type="match status" value="1"/>
</dbReference>
<dbReference type="PANTHER" id="PTHR11091">
    <property type="entry name" value="OXIDOREDUCTASE-RELATED"/>
    <property type="match status" value="1"/>
</dbReference>
<dbReference type="Pfam" id="PF02615">
    <property type="entry name" value="Ldh_2"/>
    <property type="match status" value="1"/>
</dbReference>
<dbReference type="SUPFAM" id="SSF89733">
    <property type="entry name" value="L-sulfolactate dehydrogenase-like"/>
    <property type="match status" value="1"/>
</dbReference>
<gene>
    <name evidence="1" type="primary">dlgD</name>
    <name type="ordered locus">ECP_3679</name>
</gene>
<name>DLGD_ECOL5</name>
<protein>
    <recommendedName>
        <fullName evidence="1">2,3-diketo-L-gulonate reductase</fullName>
        <shortName evidence="1">2,3-DKG reductase</shortName>
        <ecNumber evidence="1">1.1.1.130</ecNumber>
    </recommendedName>
    <alternativeName>
        <fullName evidence="1">3-dehydro-L-gulonate 2-dehydrogenase</fullName>
    </alternativeName>
</protein>
<comment type="function">
    <text evidence="1">Catalyzes the reduction of 2,3-diketo-L-gulonate in the presence of NADH, to form 3-keto-L-gulonate.</text>
</comment>
<comment type="catalytic activity">
    <reaction evidence="1">
        <text>3-dehydro-L-gulonate + NAD(+) = 2,3-dioxo-L-gulonate + NADH + H(+)</text>
        <dbReference type="Rhea" id="RHEA:21924"/>
        <dbReference type="ChEBI" id="CHEBI:15378"/>
        <dbReference type="ChEBI" id="CHEBI:57441"/>
        <dbReference type="ChEBI" id="CHEBI:57540"/>
        <dbReference type="ChEBI" id="CHEBI:57655"/>
        <dbReference type="ChEBI" id="CHEBI:57945"/>
        <dbReference type="EC" id="1.1.1.130"/>
    </reaction>
</comment>
<comment type="catalytic activity">
    <reaction evidence="1">
        <text>3-dehydro-L-gulonate + NADP(+) = 2,3-dioxo-L-gulonate + NADPH + H(+)</text>
        <dbReference type="Rhea" id="RHEA:21928"/>
        <dbReference type="ChEBI" id="CHEBI:15378"/>
        <dbReference type="ChEBI" id="CHEBI:57441"/>
        <dbReference type="ChEBI" id="CHEBI:57655"/>
        <dbReference type="ChEBI" id="CHEBI:57783"/>
        <dbReference type="ChEBI" id="CHEBI:58349"/>
        <dbReference type="EC" id="1.1.1.130"/>
    </reaction>
</comment>
<comment type="subunit">
    <text evidence="1">Homodimer.</text>
</comment>
<comment type="subcellular location">
    <subcellularLocation>
        <location evidence="1">Cytoplasm</location>
    </subcellularLocation>
</comment>
<comment type="similarity">
    <text evidence="1">Belongs to the LDH2/MDH2 oxidoreductase family. DlgD subfamily.</text>
</comment>
<reference key="1">
    <citation type="journal article" date="2006" name="Mol. Microbiol.">
        <title>Role of pathogenicity island-associated integrases in the genome plasticity of uropathogenic Escherichia coli strain 536.</title>
        <authorList>
            <person name="Hochhut B."/>
            <person name="Wilde C."/>
            <person name="Balling G."/>
            <person name="Middendorf B."/>
            <person name="Dobrindt U."/>
            <person name="Brzuszkiewicz E."/>
            <person name="Gottschalk G."/>
            <person name="Carniel E."/>
            <person name="Hacker J."/>
        </authorList>
    </citation>
    <scope>NUCLEOTIDE SEQUENCE [LARGE SCALE GENOMIC DNA]</scope>
    <source>
        <strain>536 / UPEC</strain>
    </source>
</reference>
<organism>
    <name type="scientific">Escherichia coli O6:K15:H31 (strain 536 / UPEC)</name>
    <dbReference type="NCBI Taxonomy" id="362663"/>
    <lineage>
        <taxon>Bacteria</taxon>
        <taxon>Pseudomonadati</taxon>
        <taxon>Pseudomonadota</taxon>
        <taxon>Gammaproteobacteria</taxon>
        <taxon>Enterobacterales</taxon>
        <taxon>Enterobacteriaceae</taxon>
        <taxon>Escherichia</taxon>
    </lineage>
</organism>
<proteinExistence type="inferred from homology"/>
<feature type="chain" id="PRO_1000062442" description="2,3-diketo-L-gulonate reductase">
    <location>
        <begin position="1"/>
        <end position="332"/>
    </location>
</feature>
<feature type="active site" description="Proton donor" evidence="1">
    <location>
        <position position="44"/>
    </location>
</feature>
<feature type="binding site" evidence="1">
    <location>
        <begin position="168"/>
        <end position="174"/>
    </location>
    <ligand>
        <name>NAD(+)</name>
        <dbReference type="ChEBI" id="CHEBI:57540"/>
    </ligand>
</feature>
<feature type="binding site" evidence="1">
    <location>
        <begin position="224"/>
        <end position="225"/>
    </location>
    <ligand>
        <name>NAD(+)</name>
        <dbReference type="ChEBI" id="CHEBI:57540"/>
    </ligand>
</feature>
<feature type="binding site" evidence="1">
    <location>
        <begin position="304"/>
        <end position="306"/>
    </location>
    <ligand>
        <name>NAD(+)</name>
        <dbReference type="ChEBI" id="CHEBI:57540"/>
    </ligand>
</feature>
<evidence type="ECO:0000255" key="1">
    <source>
        <dbReference type="HAMAP-Rule" id="MF_00820"/>
    </source>
</evidence>
<accession>Q0TBM6</accession>
<keyword id="KW-0963">Cytoplasm</keyword>
<keyword id="KW-0520">NAD</keyword>
<keyword id="KW-0560">Oxidoreductase</keyword>